<evidence type="ECO:0000255" key="1">
    <source>
        <dbReference type="HAMAP-Rule" id="MF_00294"/>
    </source>
</evidence>
<evidence type="ECO:0000305" key="2"/>
<comment type="similarity">
    <text evidence="1">Belongs to the bacterial ribosomal protein bL33 family.</text>
</comment>
<protein>
    <recommendedName>
        <fullName evidence="1">Large ribosomal subunit protein bL33</fullName>
    </recommendedName>
    <alternativeName>
        <fullName evidence="2">50S ribosomal protein L33</fullName>
    </alternativeName>
</protein>
<sequence>MAKAVTIKIKLVSTADTGFYYVAKKNSRTMTDKMVKKKYDPVARKHVEFKESKIK</sequence>
<gene>
    <name evidence="1" type="primary">rpmG</name>
    <name type="ordered locus">RPC_2235</name>
</gene>
<accession>Q215Z7</accession>
<reference key="1">
    <citation type="submission" date="2006-03" db="EMBL/GenBank/DDBJ databases">
        <title>Complete sequence of Rhodopseudomonas palustris BisB18.</title>
        <authorList>
            <consortium name="US DOE Joint Genome Institute"/>
            <person name="Copeland A."/>
            <person name="Lucas S."/>
            <person name="Lapidus A."/>
            <person name="Barry K."/>
            <person name="Detter J.C."/>
            <person name="Glavina del Rio T."/>
            <person name="Hammon N."/>
            <person name="Israni S."/>
            <person name="Dalin E."/>
            <person name="Tice H."/>
            <person name="Pitluck S."/>
            <person name="Chain P."/>
            <person name="Malfatti S."/>
            <person name="Shin M."/>
            <person name="Vergez L."/>
            <person name="Schmutz J."/>
            <person name="Larimer F."/>
            <person name="Land M."/>
            <person name="Hauser L."/>
            <person name="Pelletier D.A."/>
            <person name="Kyrpides N."/>
            <person name="Anderson I."/>
            <person name="Oda Y."/>
            <person name="Harwood C.S."/>
            <person name="Richardson P."/>
        </authorList>
    </citation>
    <scope>NUCLEOTIDE SEQUENCE [LARGE SCALE GENOMIC DNA]</scope>
    <source>
        <strain>BisB18</strain>
    </source>
</reference>
<feature type="chain" id="PRO_0000356632" description="Large ribosomal subunit protein bL33">
    <location>
        <begin position="1"/>
        <end position="55"/>
    </location>
</feature>
<name>RL33_RHOPB</name>
<proteinExistence type="inferred from homology"/>
<dbReference type="EMBL" id="CP000301">
    <property type="protein sequence ID" value="ABD87789.1"/>
    <property type="molecule type" value="Genomic_DNA"/>
</dbReference>
<dbReference type="SMR" id="Q215Z7"/>
<dbReference type="STRING" id="316056.RPC_2235"/>
<dbReference type="KEGG" id="rpc:RPC_2235"/>
<dbReference type="eggNOG" id="COG0267">
    <property type="taxonomic scope" value="Bacteria"/>
</dbReference>
<dbReference type="HOGENOM" id="CLU_190949_1_1_5"/>
<dbReference type="OrthoDB" id="21586at2"/>
<dbReference type="GO" id="GO:0022625">
    <property type="term" value="C:cytosolic large ribosomal subunit"/>
    <property type="evidence" value="ECO:0007669"/>
    <property type="project" value="TreeGrafter"/>
</dbReference>
<dbReference type="GO" id="GO:0003735">
    <property type="term" value="F:structural constituent of ribosome"/>
    <property type="evidence" value="ECO:0007669"/>
    <property type="project" value="InterPro"/>
</dbReference>
<dbReference type="GO" id="GO:0006412">
    <property type="term" value="P:translation"/>
    <property type="evidence" value="ECO:0007669"/>
    <property type="project" value="UniProtKB-UniRule"/>
</dbReference>
<dbReference type="FunFam" id="2.20.28.120:FF:000003">
    <property type="entry name" value="50S ribosomal protein L33"/>
    <property type="match status" value="1"/>
</dbReference>
<dbReference type="Gene3D" id="2.20.28.120">
    <property type="entry name" value="Ribosomal protein L33"/>
    <property type="match status" value="1"/>
</dbReference>
<dbReference type="HAMAP" id="MF_00294">
    <property type="entry name" value="Ribosomal_bL33"/>
    <property type="match status" value="1"/>
</dbReference>
<dbReference type="InterPro" id="IPR001705">
    <property type="entry name" value="Ribosomal_bL33"/>
</dbReference>
<dbReference type="InterPro" id="IPR038584">
    <property type="entry name" value="Ribosomal_bL33_sf"/>
</dbReference>
<dbReference type="InterPro" id="IPR011332">
    <property type="entry name" value="Ribosomal_zn-bd"/>
</dbReference>
<dbReference type="NCBIfam" id="NF001860">
    <property type="entry name" value="PRK00595.1"/>
    <property type="match status" value="1"/>
</dbReference>
<dbReference type="NCBIfam" id="TIGR01023">
    <property type="entry name" value="rpmG_bact"/>
    <property type="match status" value="1"/>
</dbReference>
<dbReference type="PANTHER" id="PTHR15238">
    <property type="entry name" value="54S RIBOSOMAL PROTEIN L39, MITOCHONDRIAL"/>
    <property type="match status" value="1"/>
</dbReference>
<dbReference type="PANTHER" id="PTHR15238:SF1">
    <property type="entry name" value="LARGE RIBOSOMAL SUBUNIT PROTEIN BL33M"/>
    <property type="match status" value="1"/>
</dbReference>
<dbReference type="Pfam" id="PF00471">
    <property type="entry name" value="Ribosomal_L33"/>
    <property type="match status" value="1"/>
</dbReference>
<dbReference type="SUPFAM" id="SSF57829">
    <property type="entry name" value="Zn-binding ribosomal proteins"/>
    <property type="match status" value="1"/>
</dbReference>
<organism>
    <name type="scientific">Rhodopseudomonas palustris (strain BisB18)</name>
    <dbReference type="NCBI Taxonomy" id="316056"/>
    <lineage>
        <taxon>Bacteria</taxon>
        <taxon>Pseudomonadati</taxon>
        <taxon>Pseudomonadota</taxon>
        <taxon>Alphaproteobacteria</taxon>
        <taxon>Hyphomicrobiales</taxon>
        <taxon>Nitrobacteraceae</taxon>
        <taxon>Rhodopseudomonas</taxon>
    </lineage>
</organism>
<keyword id="KW-0687">Ribonucleoprotein</keyword>
<keyword id="KW-0689">Ribosomal protein</keyword>